<dbReference type="EC" id="1.7.99.1" evidence="1"/>
<dbReference type="EMBL" id="CP001657">
    <property type="protein sequence ID" value="ACT12748.1"/>
    <property type="molecule type" value="Genomic_DNA"/>
</dbReference>
<dbReference type="RefSeq" id="WP_015839963.1">
    <property type="nucleotide sequence ID" value="NC_012917.1"/>
</dbReference>
<dbReference type="SMR" id="C6DF39"/>
<dbReference type="STRING" id="561230.PC1_1707"/>
<dbReference type="GeneID" id="67793710"/>
<dbReference type="KEGG" id="pct:PC1_1707"/>
<dbReference type="eggNOG" id="COG1151">
    <property type="taxonomic scope" value="Bacteria"/>
</dbReference>
<dbReference type="HOGENOM" id="CLU_038344_2_0_6"/>
<dbReference type="OrthoDB" id="9761526at2"/>
<dbReference type="PHI-base" id="PHI:10593"/>
<dbReference type="Proteomes" id="UP000002736">
    <property type="component" value="Chromosome"/>
</dbReference>
<dbReference type="GO" id="GO:0005737">
    <property type="term" value="C:cytoplasm"/>
    <property type="evidence" value="ECO:0007669"/>
    <property type="project" value="UniProtKB-SubCell"/>
</dbReference>
<dbReference type="GO" id="GO:0051537">
    <property type="term" value="F:2 iron, 2 sulfur cluster binding"/>
    <property type="evidence" value="ECO:0007669"/>
    <property type="project" value="UniProtKB-KW"/>
</dbReference>
<dbReference type="GO" id="GO:0050418">
    <property type="term" value="F:hydroxylamine reductase activity"/>
    <property type="evidence" value="ECO:0007669"/>
    <property type="project" value="UniProtKB-UniRule"/>
</dbReference>
<dbReference type="GO" id="GO:0046872">
    <property type="term" value="F:metal ion binding"/>
    <property type="evidence" value="ECO:0007669"/>
    <property type="project" value="UniProtKB-KW"/>
</dbReference>
<dbReference type="GO" id="GO:0004601">
    <property type="term" value="F:peroxidase activity"/>
    <property type="evidence" value="ECO:0007669"/>
    <property type="project" value="TreeGrafter"/>
</dbReference>
<dbReference type="GO" id="GO:0042542">
    <property type="term" value="P:response to hydrogen peroxide"/>
    <property type="evidence" value="ECO:0007669"/>
    <property type="project" value="TreeGrafter"/>
</dbReference>
<dbReference type="CDD" id="cd01914">
    <property type="entry name" value="HCP"/>
    <property type="match status" value="1"/>
</dbReference>
<dbReference type="FunFam" id="1.20.1270.20:FF:000001">
    <property type="entry name" value="Hydroxylamine reductase"/>
    <property type="match status" value="1"/>
</dbReference>
<dbReference type="FunFam" id="1.20.1270.20:FF:000002">
    <property type="entry name" value="Hydroxylamine reductase"/>
    <property type="match status" value="1"/>
</dbReference>
<dbReference type="FunFam" id="3.40.50.2030:FF:000001">
    <property type="entry name" value="Hydroxylamine reductase"/>
    <property type="match status" value="1"/>
</dbReference>
<dbReference type="FunFam" id="3.40.50.2030:FF:000002">
    <property type="entry name" value="Hydroxylamine reductase"/>
    <property type="match status" value="1"/>
</dbReference>
<dbReference type="Gene3D" id="1.20.1270.20">
    <property type="match status" value="2"/>
</dbReference>
<dbReference type="Gene3D" id="3.40.50.2030">
    <property type="match status" value="2"/>
</dbReference>
<dbReference type="HAMAP" id="MF_00069">
    <property type="entry name" value="Hydroxylam_reduct"/>
    <property type="match status" value="1"/>
</dbReference>
<dbReference type="InterPro" id="IPR004137">
    <property type="entry name" value="HCP/CODH"/>
</dbReference>
<dbReference type="InterPro" id="IPR010048">
    <property type="entry name" value="Hydroxylam_reduct"/>
</dbReference>
<dbReference type="InterPro" id="IPR016099">
    <property type="entry name" value="Prismane-like_a/b-sand"/>
</dbReference>
<dbReference type="InterPro" id="IPR011254">
    <property type="entry name" value="Prismane-like_sf"/>
</dbReference>
<dbReference type="InterPro" id="IPR016100">
    <property type="entry name" value="Prismane_a-bundle"/>
</dbReference>
<dbReference type="NCBIfam" id="TIGR01703">
    <property type="entry name" value="hybrid_clust"/>
    <property type="match status" value="1"/>
</dbReference>
<dbReference type="NCBIfam" id="NF003658">
    <property type="entry name" value="PRK05290.1"/>
    <property type="match status" value="1"/>
</dbReference>
<dbReference type="PANTHER" id="PTHR30109">
    <property type="entry name" value="HYDROXYLAMINE REDUCTASE"/>
    <property type="match status" value="1"/>
</dbReference>
<dbReference type="PANTHER" id="PTHR30109:SF0">
    <property type="entry name" value="HYDROXYLAMINE REDUCTASE"/>
    <property type="match status" value="1"/>
</dbReference>
<dbReference type="Pfam" id="PF03063">
    <property type="entry name" value="Prismane"/>
    <property type="match status" value="1"/>
</dbReference>
<dbReference type="PIRSF" id="PIRSF000076">
    <property type="entry name" value="HCP"/>
    <property type="match status" value="1"/>
</dbReference>
<dbReference type="SUPFAM" id="SSF56821">
    <property type="entry name" value="Prismane protein-like"/>
    <property type="match status" value="1"/>
</dbReference>
<accession>C6DF39</accession>
<sequence>MFCVQCEQTIRTPVGNGCSYAQGMCGKTAETSDLQDLLVAVLQGLSAWALKARELDIIDHDVDNFAPRAFFSTLTNVNFDSQRIIGYAQEAITLRESLAVRCRLHDATATVDHPMAALQLAGNDIPTLLQQAADFALDSDKAIVGDDVHGLRMLNLYGLKGAAAYMEHAHVLGQYDDAIYAEYHAFMAWLGTQPSDVDTLLNNAMGIGKMNFNVMAILDRGETDAYGNPQPTAVNVRPIAGKAILISGHDLKDLRMLLEQTEGTGVNIYTHGEMLPAHGYPELKKFKHLAGNYGSGWQNQQTEFAKFPGAIVMTSNCIIDPNVGNYGDRIWTRSIVGWPGVNHLEGDDFSPVIEQAQSLAGFPYSEIEHMITVGFGRETLLSAADTVIDLVAQKKLRHVFLVGGCDGSREERSYFTDFTLNVPQDCLIMTLACGKYRFNKLDFGTLEGLPRLLDVGQCNDAYSAIILAVKLAEKLGCGVNDLPLSLVLSWFEQKAIVILLTLLSLGVKNIYTGPTAPGFLTDNLLAILNEKFGMRAITTVEQDMNTILAA</sequence>
<comment type="function">
    <text evidence="1">Catalyzes the reduction of hydroxylamine to form NH(3) and H(2)O.</text>
</comment>
<comment type="catalytic activity">
    <reaction evidence="1">
        <text>A + NH4(+) + H2O = hydroxylamine + AH2 + H(+)</text>
        <dbReference type="Rhea" id="RHEA:22052"/>
        <dbReference type="ChEBI" id="CHEBI:13193"/>
        <dbReference type="ChEBI" id="CHEBI:15377"/>
        <dbReference type="ChEBI" id="CHEBI:15378"/>
        <dbReference type="ChEBI" id="CHEBI:15429"/>
        <dbReference type="ChEBI" id="CHEBI:17499"/>
        <dbReference type="ChEBI" id="CHEBI:28938"/>
        <dbReference type="EC" id="1.7.99.1"/>
    </reaction>
</comment>
<comment type="cofactor">
    <cofactor evidence="1">
        <name>[2Fe-2S] cluster</name>
        <dbReference type="ChEBI" id="CHEBI:190135"/>
    </cofactor>
    <text evidence="1">Binds 1 [2Fe-2S] cluster.</text>
</comment>
<comment type="cofactor">
    <cofactor evidence="1">
        <name>hybrid [4Fe-2O-2S] cluster</name>
        <dbReference type="ChEBI" id="CHEBI:60519"/>
    </cofactor>
    <text evidence="1">Binds 1 hybrid [4Fe-2O-2S] cluster.</text>
</comment>
<comment type="subcellular location">
    <subcellularLocation>
        <location evidence="1">Cytoplasm</location>
    </subcellularLocation>
</comment>
<comment type="similarity">
    <text evidence="1">Belongs to the HCP family.</text>
</comment>
<feature type="chain" id="PRO_1000202439" description="Hydroxylamine reductase">
    <location>
        <begin position="1"/>
        <end position="550"/>
    </location>
</feature>
<feature type="binding site" evidence="1">
    <location>
        <position position="3"/>
    </location>
    <ligand>
        <name>[2Fe-2S] cluster</name>
        <dbReference type="ChEBI" id="CHEBI:190135"/>
    </ligand>
</feature>
<feature type="binding site" evidence="1">
    <location>
        <position position="6"/>
    </location>
    <ligand>
        <name>[2Fe-2S] cluster</name>
        <dbReference type="ChEBI" id="CHEBI:190135"/>
    </ligand>
</feature>
<feature type="binding site" evidence="1">
    <location>
        <position position="18"/>
    </location>
    <ligand>
        <name>[2Fe-2S] cluster</name>
        <dbReference type="ChEBI" id="CHEBI:190135"/>
    </ligand>
</feature>
<feature type="binding site" evidence="1">
    <location>
        <position position="25"/>
    </location>
    <ligand>
        <name>[2Fe-2S] cluster</name>
        <dbReference type="ChEBI" id="CHEBI:190135"/>
    </ligand>
</feature>
<feature type="binding site" evidence="1">
    <location>
        <position position="249"/>
    </location>
    <ligand>
        <name>hybrid [4Fe-2O-2S] cluster</name>
        <dbReference type="ChEBI" id="CHEBI:60519"/>
    </ligand>
</feature>
<feature type="binding site" evidence="1">
    <location>
        <position position="273"/>
    </location>
    <ligand>
        <name>hybrid [4Fe-2O-2S] cluster</name>
        <dbReference type="ChEBI" id="CHEBI:60519"/>
    </ligand>
</feature>
<feature type="binding site" evidence="1">
    <location>
        <position position="317"/>
    </location>
    <ligand>
        <name>hybrid [4Fe-2O-2S] cluster</name>
        <dbReference type="ChEBI" id="CHEBI:60519"/>
    </ligand>
</feature>
<feature type="binding site" description="via persulfide group" evidence="1">
    <location>
        <position position="405"/>
    </location>
    <ligand>
        <name>hybrid [4Fe-2O-2S] cluster</name>
        <dbReference type="ChEBI" id="CHEBI:60519"/>
    </ligand>
</feature>
<feature type="binding site" evidence="1">
    <location>
        <position position="433"/>
    </location>
    <ligand>
        <name>hybrid [4Fe-2O-2S] cluster</name>
        <dbReference type="ChEBI" id="CHEBI:60519"/>
    </ligand>
</feature>
<feature type="binding site" evidence="1">
    <location>
        <position position="458"/>
    </location>
    <ligand>
        <name>hybrid [4Fe-2O-2S] cluster</name>
        <dbReference type="ChEBI" id="CHEBI:60519"/>
    </ligand>
</feature>
<feature type="binding site" evidence="1">
    <location>
        <position position="492"/>
    </location>
    <ligand>
        <name>hybrid [4Fe-2O-2S] cluster</name>
        <dbReference type="ChEBI" id="CHEBI:60519"/>
    </ligand>
</feature>
<feature type="binding site" evidence="1">
    <location>
        <position position="494"/>
    </location>
    <ligand>
        <name>hybrid [4Fe-2O-2S] cluster</name>
        <dbReference type="ChEBI" id="CHEBI:60519"/>
    </ligand>
</feature>
<feature type="modified residue" description="Cysteine persulfide" evidence="1">
    <location>
        <position position="405"/>
    </location>
</feature>
<proteinExistence type="inferred from homology"/>
<name>HCP_PECCP</name>
<organism>
    <name type="scientific">Pectobacterium carotovorum subsp. carotovorum (strain PC1)</name>
    <dbReference type="NCBI Taxonomy" id="561230"/>
    <lineage>
        <taxon>Bacteria</taxon>
        <taxon>Pseudomonadati</taxon>
        <taxon>Pseudomonadota</taxon>
        <taxon>Gammaproteobacteria</taxon>
        <taxon>Enterobacterales</taxon>
        <taxon>Pectobacteriaceae</taxon>
        <taxon>Pectobacterium</taxon>
    </lineage>
</organism>
<gene>
    <name evidence="1" type="primary">hcp</name>
    <name type="ordered locus">PC1_1707</name>
</gene>
<reference key="1">
    <citation type="submission" date="2009-07" db="EMBL/GenBank/DDBJ databases">
        <title>Complete sequence of Pectobacterium carotovorum subsp. carotovorum PC1.</title>
        <authorList>
            <consortium name="US DOE Joint Genome Institute"/>
            <person name="Lucas S."/>
            <person name="Copeland A."/>
            <person name="Lapidus A."/>
            <person name="Glavina del Rio T."/>
            <person name="Tice H."/>
            <person name="Bruce D."/>
            <person name="Goodwin L."/>
            <person name="Pitluck S."/>
            <person name="Munk A.C."/>
            <person name="Brettin T."/>
            <person name="Detter J.C."/>
            <person name="Han C."/>
            <person name="Tapia R."/>
            <person name="Larimer F."/>
            <person name="Land M."/>
            <person name="Hauser L."/>
            <person name="Kyrpides N."/>
            <person name="Mikhailova N."/>
            <person name="Balakrishnan V."/>
            <person name="Glasner J."/>
            <person name="Perna N.T."/>
        </authorList>
    </citation>
    <scope>NUCLEOTIDE SEQUENCE [LARGE SCALE GENOMIC DNA]</scope>
    <source>
        <strain>PC1</strain>
    </source>
</reference>
<keyword id="KW-0001">2Fe-2S</keyword>
<keyword id="KW-0963">Cytoplasm</keyword>
<keyword id="KW-0408">Iron</keyword>
<keyword id="KW-0411">Iron-sulfur</keyword>
<keyword id="KW-0479">Metal-binding</keyword>
<keyword id="KW-0560">Oxidoreductase</keyword>
<evidence type="ECO:0000255" key="1">
    <source>
        <dbReference type="HAMAP-Rule" id="MF_00069"/>
    </source>
</evidence>
<protein>
    <recommendedName>
        <fullName evidence="1">Hydroxylamine reductase</fullName>
        <ecNumber evidence="1">1.7.99.1</ecNumber>
    </recommendedName>
    <alternativeName>
        <fullName evidence="1">Hybrid-cluster protein</fullName>
        <shortName evidence="1">HCP</shortName>
    </alternativeName>
    <alternativeName>
        <fullName evidence="1">Prismane protein</fullName>
    </alternativeName>
</protein>